<proteinExistence type="inferred from homology"/>
<name>SYS_YERPG</name>
<evidence type="ECO:0000255" key="1">
    <source>
        <dbReference type="HAMAP-Rule" id="MF_00176"/>
    </source>
</evidence>
<gene>
    <name evidence="1" type="primary">serS</name>
    <name type="ordered locus">YpAngola_A1616</name>
</gene>
<comment type="function">
    <text evidence="1">Catalyzes the attachment of serine to tRNA(Ser). Is also able to aminoacylate tRNA(Sec) with serine, to form the misacylated tRNA L-seryl-tRNA(Sec), which will be further converted into selenocysteinyl-tRNA(Sec).</text>
</comment>
<comment type="catalytic activity">
    <reaction evidence="1">
        <text>tRNA(Ser) + L-serine + ATP = L-seryl-tRNA(Ser) + AMP + diphosphate + H(+)</text>
        <dbReference type="Rhea" id="RHEA:12292"/>
        <dbReference type="Rhea" id="RHEA-COMP:9669"/>
        <dbReference type="Rhea" id="RHEA-COMP:9703"/>
        <dbReference type="ChEBI" id="CHEBI:15378"/>
        <dbReference type="ChEBI" id="CHEBI:30616"/>
        <dbReference type="ChEBI" id="CHEBI:33019"/>
        <dbReference type="ChEBI" id="CHEBI:33384"/>
        <dbReference type="ChEBI" id="CHEBI:78442"/>
        <dbReference type="ChEBI" id="CHEBI:78533"/>
        <dbReference type="ChEBI" id="CHEBI:456215"/>
        <dbReference type="EC" id="6.1.1.11"/>
    </reaction>
</comment>
<comment type="catalytic activity">
    <reaction evidence="1">
        <text>tRNA(Sec) + L-serine + ATP = L-seryl-tRNA(Sec) + AMP + diphosphate + H(+)</text>
        <dbReference type="Rhea" id="RHEA:42580"/>
        <dbReference type="Rhea" id="RHEA-COMP:9742"/>
        <dbReference type="Rhea" id="RHEA-COMP:10128"/>
        <dbReference type="ChEBI" id="CHEBI:15378"/>
        <dbReference type="ChEBI" id="CHEBI:30616"/>
        <dbReference type="ChEBI" id="CHEBI:33019"/>
        <dbReference type="ChEBI" id="CHEBI:33384"/>
        <dbReference type="ChEBI" id="CHEBI:78442"/>
        <dbReference type="ChEBI" id="CHEBI:78533"/>
        <dbReference type="ChEBI" id="CHEBI:456215"/>
        <dbReference type="EC" id="6.1.1.11"/>
    </reaction>
</comment>
<comment type="pathway">
    <text evidence="1">Aminoacyl-tRNA biosynthesis; selenocysteinyl-tRNA(Sec) biosynthesis; L-seryl-tRNA(Sec) from L-serine and tRNA(Sec): step 1/1.</text>
</comment>
<comment type="subunit">
    <text evidence="1">Homodimer. The tRNA molecule binds across the dimer.</text>
</comment>
<comment type="subcellular location">
    <subcellularLocation>
        <location evidence="1">Cytoplasm</location>
    </subcellularLocation>
</comment>
<comment type="domain">
    <text evidence="1">Consists of two distinct domains, a catalytic core and a N-terminal extension that is involved in tRNA binding.</text>
</comment>
<comment type="similarity">
    <text evidence="1">Belongs to the class-II aminoacyl-tRNA synthetase family. Type-1 seryl-tRNA synthetase subfamily.</text>
</comment>
<dbReference type="EC" id="6.1.1.11" evidence="1"/>
<dbReference type="EMBL" id="CP000901">
    <property type="protein sequence ID" value="ABX84973.1"/>
    <property type="molecule type" value="Genomic_DNA"/>
</dbReference>
<dbReference type="RefSeq" id="WP_002211336.1">
    <property type="nucleotide sequence ID" value="NZ_CP009935.1"/>
</dbReference>
<dbReference type="SMR" id="A9R5V2"/>
<dbReference type="GeneID" id="57977175"/>
<dbReference type="KEGG" id="ypg:YpAngola_A1616"/>
<dbReference type="PATRIC" id="fig|349746.12.peg.2582"/>
<dbReference type="UniPathway" id="UPA00906">
    <property type="reaction ID" value="UER00895"/>
</dbReference>
<dbReference type="GO" id="GO:0005737">
    <property type="term" value="C:cytoplasm"/>
    <property type="evidence" value="ECO:0007669"/>
    <property type="project" value="UniProtKB-SubCell"/>
</dbReference>
<dbReference type="GO" id="GO:0005524">
    <property type="term" value="F:ATP binding"/>
    <property type="evidence" value="ECO:0007669"/>
    <property type="project" value="UniProtKB-UniRule"/>
</dbReference>
<dbReference type="GO" id="GO:0004828">
    <property type="term" value="F:serine-tRNA ligase activity"/>
    <property type="evidence" value="ECO:0007669"/>
    <property type="project" value="UniProtKB-UniRule"/>
</dbReference>
<dbReference type="GO" id="GO:0016260">
    <property type="term" value="P:selenocysteine biosynthetic process"/>
    <property type="evidence" value="ECO:0007669"/>
    <property type="project" value="UniProtKB-UniRule"/>
</dbReference>
<dbReference type="GO" id="GO:0006434">
    <property type="term" value="P:seryl-tRNA aminoacylation"/>
    <property type="evidence" value="ECO:0007669"/>
    <property type="project" value="UniProtKB-UniRule"/>
</dbReference>
<dbReference type="CDD" id="cd00770">
    <property type="entry name" value="SerRS_core"/>
    <property type="match status" value="1"/>
</dbReference>
<dbReference type="FunFam" id="1.10.287.40:FF:000001">
    <property type="entry name" value="Serine--tRNA ligase"/>
    <property type="match status" value="1"/>
</dbReference>
<dbReference type="FunFam" id="3.30.930.10:FF:000018">
    <property type="entry name" value="Serine--tRNA ligase"/>
    <property type="match status" value="1"/>
</dbReference>
<dbReference type="Gene3D" id="3.30.930.10">
    <property type="entry name" value="Bira Bifunctional Protein, Domain 2"/>
    <property type="match status" value="1"/>
</dbReference>
<dbReference type="Gene3D" id="1.10.287.40">
    <property type="entry name" value="Serine-tRNA synthetase, tRNA binding domain"/>
    <property type="match status" value="1"/>
</dbReference>
<dbReference type="HAMAP" id="MF_00176">
    <property type="entry name" value="Ser_tRNA_synth_type1"/>
    <property type="match status" value="1"/>
</dbReference>
<dbReference type="InterPro" id="IPR002314">
    <property type="entry name" value="aa-tRNA-synt_IIb"/>
</dbReference>
<dbReference type="InterPro" id="IPR006195">
    <property type="entry name" value="aa-tRNA-synth_II"/>
</dbReference>
<dbReference type="InterPro" id="IPR045864">
    <property type="entry name" value="aa-tRNA-synth_II/BPL/LPL"/>
</dbReference>
<dbReference type="InterPro" id="IPR002317">
    <property type="entry name" value="Ser-tRNA-ligase_type_1"/>
</dbReference>
<dbReference type="InterPro" id="IPR015866">
    <property type="entry name" value="Ser-tRNA-synth_1_N"/>
</dbReference>
<dbReference type="InterPro" id="IPR042103">
    <property type="entry name" value="SerRS_1_N_sf"/>
</dbReference>
<dbReference type="InterPro" id="IPR033729">
    <property type="entry name" value="SerRS_core"/>
</dbReference>
<dbReference type="InterPro" id="IPR010978">
    <property type="entry name" value="tRNA-bd_arm"/>
</dbReference>
<dbReference type="NCBIfam" id="TIGR00414">
    <property type="entry name" value="serS"/>
    <property type="match status" value="1"/>
</dbReference>
<dbReference type="PANTHER" id="PTHR43697:SF1">
    <property type="entry name" value="SERINE--TRNA LIGASE"/>
    <property type="match status" value="1"/>
</dbReference>
<dbReference type="PANTHER" id="PTHR43697">
    <property type="entry name" value="SERYL-TRNA SYNTHETASE"/>
    <property type="match status" value="1"/>
</dbReference>
<dbReference type="Pfam" id="PF02403">
    <property type="entry name" value="Seryl_tRNA_N"/>
    <property type="match status" value="1"/>
</dbReference>
<dbReference type="Pfam" id="PF00587">
    <property type="entry name" value="tRNA-synt_2b"/>
    <property type="match status" value="1"/>
</dbReference>
<dbReference type="PIRSF" id="PIRSF001529">
    <property type="entry name" value="Ser-tRNA-synth_IIa"/>
    <property type="match status" value="1"/>
</dbReference>
<dbReference type="PRINTS" id="PR00981">
    <property type="entry name" value="TRNASYNTHSER"/>
</dbReference>
<dbReference type="SUPFAM" id="SSF55681">
    <property type="entry name" value="Class II aaRS and biotin synthetases"/>
    <property type="match status" value="1"/>
</dbReference>
<dbReference type="SUPFAM" id="SSF46589">
    <property type="entry name" value="tRNA-binding arm"/>
    <property type="match status" value="1"/>
</dbReference>
<dbReference type="PROSITE" id="PS50862">
    <property type="entry name" value="AA_TRNA_LIGASE_II"/>
    <property type="match status" value="1"/>
</dbReference>
<organism>
    <name type="scientific">Yersinia pestis bv. Antiqua (strain Angola)</name>
    <dbReference type="NCBI Taxonomy" id="349746"/>
    <lineage>
        <taxon>Bacteria</taxon>
        <taxon>Pseudomonadati</taxon>
        <taxon>Pseudomonadota</taxon>
        <taxon>Gammaproteobacteria</taxon>
        <taxon>Enterobacterales</taxon>
        <taxon>Yersiniaceae</taxon>
        <taxon>Yersinia</taxon>
    </lineage>
</organism>
<feature type="chain" id="PRO_1000098151" description="Serine--tRNA ligase">
    <location>
        <begin position="1"/>
        <end position="430"/>
    </location>
</feature>
<feature type="binding site" evidence="1">
    <location>
        <begin position="237"/>
        <end position="239"/>
    </location>
    <ligand>
        <name>L-serine</name>
        <dbReference type="ChEBI" id="CHEBI:33384"/>
    </ligand>
</feature>
<feature type="binding site" evidence="1">
    <location>
        <begin position="268"/>
        <end position="270"/>
    </location>
    <ligand>
        <name>ATP</name>
        <dbReference type="ChEBI" id="CHEBI:30616"/>
    </ligand>
</feature>
<feature type="binding site" evidence="1">
    <location>
        <position position="291"/>
    </location>
    <ligand>
        <name>L-serine</name>
        <dbReference type="ChEBI" id="CHEBI:33384"/>
    </ligand>
</feature>
<feature type="binding site" evidence="1">
    <location>
        <begin position="355"/>
        <end position="358"/>
    </location>
    <ligand>
        <name>ATP</name>
        <dbReference type="ChEBI" id="CHEBI:30616"/>
    </ligand>
</feature>
<feature type="binding site" evidence="1">
    <location>
        <position position="391"/>
    </location>
    <ligand>
        <name>L-serine</name>
        <dbReference type="ChEBI" id="CHEBI:33384"/>
    </ligand>
</feature>
<keyword id="KW-0030">Aminoacyl-tRNA synthetase</keyword>
<keyword id="KW-0067">ATP-binding</keyword>
<keyword id="KW-0963">Cytoplasm</keyword>
<keyword id="KW-0436">Ligase</keyword>
<keyword id="KW-0547">Nucleotide-binding</keyword>
<keyword id="KW-0648">Protein biosynthesis</keyword>
<accession>A9R5V2</accession>
<protein>
    <recommendedName>
        <fullName evidence="1">Serine--tRNA ligase</fullName>
        <ecNumber evidence="1">6.1.1.11</ecNumber>
    </recommendedName>
    <alternativeName>
        <fullName evidence="1">Seryl-tRNA synthetase</fullName>
        <shortName evidence="1">SerRS</shortName>
    </alternativeName>
    <alternativeName>
        <fullName evidence="1">Seryl-tRNA(Ser/Sec) synthetase</fullName>
    </alternativeName>
</protein>
<reference key="1">
    <citation type="journal article" date="2010" name="J. Bacteriol.">
        <title>Genome sequence of the deep-rooted Yersinia pestis strain Angola reveals new insights into the evolution and pangenome of the plague bacterium.</title>
        <authorList>
            <person name="Eppinger M."/>
            <person name="Worsham P.L."/>
            <person name="Nikolich M.P."/>
            <person name="Riley D.R."/>
            <person name="Sebastian Y."/>
            <person name="Mou S."/>
            <person name="Achtman M."/>
            <person name="Lindler L.E."/>
            <person name="Ravel J."/>
        </authorList>
    </citation>
    <scope>NUCLEOTIDE SEQUENCE [LARGE SCALE GENOMIC DNA]</scope>
    <source>
        <strain>Angola</strain>
    </source>
</reference>
<sequence>MLDPNMLRNELDAVAEKLARRGFKLDVEVLRQQEERRKVLQVETESLQAERNSRSKQIGAAKARGEDIEPLRLEVNALGEKLDAAKAELDKLQNEIRDLALSIPNLPDDSVPVGKNENDNIEVSRWGEPRKYDFDVKDHVSLGEMAGGLDFAAAVKLTGARFVVMKGQIARMHRALSQFMLDLHTEKHGYLEAYVPYLVNHATLYGTGQLPKFGEDLFHTKPLAEESDNSNYALIPTAEVPLTNLVRDEILEEDSLPLKLTAHTPCFRSEAGSYGRDTRGLIRMHQFDKVEMVQITRPEDSMAALEELTGHAEKVLQLLELPYRKVLLCTGDMGFGSSKTYDLEVWLPAQDTYREISSCSNMWDFQARRMQARYRNKTDRKTRLVHTLNGSGLAVGRTLVAVLENYQQADGRIQVPDVLRPYMGGLEYIG</sequence>